<comment type="function">
    <text evidence="1">May be involved in the translation of target mRNAs by scanning and recognition of the initiation codon. Involved in translation initiation; promotes recruitment of aminoacetyled initiator tRNA to P site of 40S ribosomes. Can promote release of deacylated tRNA and mRNA from recycled 40S subunits following ABCE1-mediated dissociation of post-termination ribosomal complexes into subunits (By similarity).</text>
</comment>
<comment type="subunit">
    <text evidence="1">Interacts with MCTS1.</text>
</comment>
<comment type="similarity">
    <text evidence="6">Belongs to the DENR family.</text>
</comment>
<protein>
    <recommendedName>
        <fullName>Density-regulated protein</fullName>
        <shortName>DRP</shortName>
    </recommendedName>
</protein>
<gene>
    <name type="primary">DENR</name>
</gene>
<evidence type="ECO:0000250" key="1"/>
<evidence type="ECO:0000250" key="2">
    <source>
        <dbReference type="UniProtKB" id="O43583"/>
    </source>
</evidence>
<evidence type="ECO:0000250" key="3">
    <source>
        <dbReference type="UniProtKB" id="Q9CQJ6"/>
    </source>
</evidence>
<evidence type="ECO:0000255" key="4">
    <source>
        <dbReference type="PROSITE-ProRule" id="PRU00200"/>
    </source>
</evidence>
<evidence type="ECO:0000256" key="5">
    <source>
        <dbReference type="SAM" id="MobiDB-lite"/>
    </source>
</evidence>
<evidence type="ECO:0000305" key="6"/>
<keyword id="KW-0007">Acetylation</keyword>
<keyword id="KW-0396">Initiation factor</keyword>
<keyword id="KW-0597">Phosphoprotein</keyword>
<keyword id="KW-0648">Protein biosynthesis</keyword>
<keyword id="KW-1185">Reference proteome</keyword>
<sequence length="198" mass="22217">MAADISESGGHDCRGDQRSNTKLDADYPLRVLYCGVCSLPTEYCEYMPDVAKCRQWLEKNFPNEFAKLTVENSPKQEAGISEGQGTAGEEEEKKKQKRGGRGQIKQKKKTVPQKVTIAKIPRAKKKYVTRVCGLATFEIDLKEAQRFFAQKFSCGASVTGEDEIIIQGDFTDDIIDVIQEKWPEVDDDSIEDLGEVKK</sequence>
<feature type="initiator methionine" description="Removed" evidence="2">
    <location>
        <position position="1"/>
    </location>
</feature>
<feature type="chain" id="PRO_0000322640" description="Density-regulated protein">
    <location>
        <begin position="2"/>
        <end position="198"/>
    </location>
</feature>
<feature type="domain" description="SUI1" evidence="4">
    <location>
        <begin position="115"/>
        <end position="182"/>
    </location>
</feature>
<feature type="region of interest" description="Disordered" evidence="5">
    <location>
        <begin position="1"/>
        <end position="20"/>
    </location>
</feature>
<feature type="region of interest" description="Disordered" evidence="5">
    <location>
        <begin position="72"/>
        <end position="110"/>
    </location>
</feature>
<feature type="compositionally biased region" description="Basic and acidic residues" evidence="5">
    <location>
        <begin position="9"/>
        <end position="20"/>
    </location>
</feature>
<feature type="compositionally biased region" description="Basic residues" evidence="5">
    <location>
        <begin position="95"/>
        <end position="110"/>
    </location>
</feature>
<feature type="modified residue" description="N-acetylalanine" evidence="2">
    <location>
        <position position="2"/>
    </location>
</feature>
<feature type="modified residue" description="Phosphoserine" evidence="2">
    <location>
        <position position="73"/>
    </location>
</feature>
<feature type="modified residue" description="Phosphothreonine" evidence="2">
    <location>
        <position position="86"/>
    </location>
</feature>
<feature type="modified residue" description="Phosphoserine" evidence="3">
    <location>
        <position position="189"/>
    </location>
</feature>
<dbReference type="EMBL" id="BC113316">
    <property type="protein sequence ID" value="AAI13317.1"/>
    <property type="molecule type" value="mRNA"/>
</dbReference>
<dbReference type="RefSeq" id="NP_001039993.1">
    <property type="nucleotide sequence ID" value="NM_001046528.1"/>
</dbReference>
<dbReference type="RefSeq" id="XP_001252166.1">
    <property type="nucleotide sequence ID" value="XM_001252165.6"/>
</dbReference>
<dbReference type="RefSeq" id="XP_015330995.1">
    <property type="nucleotide sequence ID" value="XM_015475509.1"/>
</dbReference>
<dbReference type="RefSeq" id="XP_059732138.1">
    <property type="nucleotide sequence ID" value="XM_059876155.1"/>
</dbReference>
<dbReference type="SMR" id="Q2HJ47"/>
<dbReference type="FunCoup" id="Q2HJ47">
    <property type="interactions" value="4534"/>
</dbReference>
<dbReference type="STRING" id="9913.ENSBTAP00000043335"/>
<dbReference type="PaxDb" id="9913-ENSBTAP00000046224"/>
<dbReference type="PeptideAtlas" id="Q2HJ47"/>
<dbReference type="Ensembl" id="ENSBTAT00000110949.1">
    <property type="protein sequence ID" value="ENSBTAP00000081266.1"/>
    <property type="gene ID" value="ENSBTAG00000068852.1"/>
</dbReference>
<dbReference type="GeneID" id="614238"/>
<dbReference type="KEGG" id="bta:614238"/>
<dbReference type="CTD" id="8562"/>
<dbReference type="VEuPathDB" id="HostDB:ENSBTAG00000032433"/>
<dbReference type="VEuPathDB" id="HostDB:ENSBTAG00000049723"/>
<dbReference type="eggNOG" id="KOG3239">
    <property type="taxonomic scope" value="Eukaryota"/>
</dbReference>
<dbReference type="GeneTree" id="ENSGT00390000014349"/>
<dbReference type="HOGENOM" id="CLU_073511_1_0_1"/>
<dbReference type="InParanoid" id="Q2HJ47"/>
<dbReference type="OMA" id="EVFEIDM"/>
<dbReference type="OrthoDB" id="277199at2759"/>
<dbReference type="TreeFam" id="TF105912"/>
<dbReference type="Proteomes" id="UP000009136">
    <property type="component" value="Chromosome 29"/>
</dbReference>
<dbReference type="Bgee" id="ENSBTAG00000032433">
    <property type="expression patterns" value="Expressed in biceps femoris and 106 other cell types or tissues"/>
</dbReference>
<dbReference type="GO" id="GO:0003743">
    <property type="term" value="F:translation initiation factor activity"/>
    <property type="evidence" value="ECO:0007669"/>
    <property type="project" value="UniProtKB-KW"/>
</dbReference>
<dbReference type="GO" id="GO:0001731">
    <property type="term" value="P:formation of translation preinitiation complex"/>
    <property type="evidence" value="ECO:0000318"/>
    <property type="project" value="GO_Central"/>
</dbReference>
<dbReference type="GO" id="GO:0002188">
    <property type="term" value="P:translation reinitiation"/>
    <property type="evidence" value="ECO:0000318"/>
    <property type="project" value="GO_Central"/>
</dbReference>
<dbReference type="CDD" id="cd11607">
    <property type="entry name" value="DENR_C"/>
    <property type="match status" value="1"/>
</dbReference>
<dbReference type="FunFam" id="3.30.780.10:FF:000004">
    <property type="entry name" value="density-regulated protein-like"/>
    <property type="match status" value="1"/>
</dbReference>
<dbReference type="Gene3D" id="3.30.780.10">
    <property type="entry name" value="SUI1-like domain"/>
    <property type="match status" value="1"/>
</dbReference>
<dbReference type="InterPro" id="IPR050318">
    <property type="entry name" value="DENR/SUI1_TIF"/>
</dbReference>
<dbReference type="InterPro" id="IPR046447">
    <property type="entry name" value="DENR_C"/>
</dbReference>
<dbReference type="InterPro" id="IPR005873">
    <property type="entry name" value="DENR_eukaryotes"/>
</dbReference>
<dbReference type="InterPro" id="IPR048517">
    <property type="entry name" value="DENR_N"/>
</dbReference>
<dbReference type="InterPro" id="IPR001950">
    <property type="entry name" value="SUI1"/>
</dbReference>
<dbReference type="InterPro" id="IPR036877">
    <property type="entry name" value="SUI1_dom_sf"/>
</dbReference>
<dbReference type="NCBIfam" id="TIGR01159">
    <property type="entry name" value="DRP1"/>
    <property type="match status" value="1"/>
</dbReference>
<dbReference type="PANTHER" id="PTHR12789:SF0">
    <property type="entry name" value="DENSITY-REGULATED PROTEIN"/>
    <property type="match status" value="1"/>
</dbReference>
<dbReference type="PANTHER" id="PTHR12789">
    <property type="entry name" value="DENSITY-REGULATED PROTEIN HOMOLOG"/>
    <property type="match status" value="1"/>
</dbReference>
<dbReference type="Pfam" id="PF21023">
    <property type="entry name" value="DENR_N"/>
    <property type="match status" value="1"/>
</dbReference>
<dbReference type="Pfam" id="PF01253">
    <property type="entry name" value="SUI1"/>
    <property type="match status" value="1"/>
</dbReference>
<dbReference type="SUPFAM" id="SSF55159">
    <property type="entry name" value="eIF1-like"/>
    <property type="match status" value="1"/>
</dbReference>
<dbReference type="PROSITE" id="PS50296">
    <property type="entry name" value="SUI1"/>
    <property type="match status" value="1"/>
</dbReference>
<accession>Q2HJ47</accession>
<organism>
    <name type="scientific">Bos taurus</name>
    <name type="common">Bovine</name>
    <dbReference type="NCBI Taxonomy" id="9913"/>
    <lineage>
        <taxon>Eukaryota</taxon>
        <taxon>Metazoa</taxon>
        <taxon>Chordata</taxon>
        <taxon>Craniata</taxon>
        <taxon>Vertebrata</taxon>
        <taxon>Euteleostomi</taxon>
        <taxon>Mammalia</taxon>
        <taxon>Eutheria</taxon>
        <taxon>Laurasiatheria</taxon>
        <taxon>Artiodactyla</taxon>
        <taxon>Ruminantia</taxon>
        <taxon>Pecora</taxon>
        <taxon>Bovidae</taxon>
        <taxon>Bovinae</taxon>
        <taxon>Bos</taxon>
    </lineage>
</organism>
<name>DENR_BOVIN</name>
<reference key="1">
    <citation type="submission" date="2006-02" db="EMBL/GenBank/DDBJ databases">
        <authorList>
            <consortium name="NIH - Mammalian Gene Collection (MGC) project"/>
        </authorList>
    </citation>
    <scope>NUCLEOTIDE SEQUENCE [LARGE SCALE MRNA]</scope>
    <source>
        <strain>Hereford</strain>
        <tissue>Uterus</tissue>
    </source>
</reference>
<proteinExistence type="evidence at transcript level"/>